<dbReference type="EC" id="2.3.2.-"/>
<dbReference type="EMBL" id="AE000516">
    <property type="protein sequence ID" value="AAK46901.1"/>
    <property type="molecule type" value="Genomic_DNA"/>
</dbReference>
<dbReference type="EMBL" id="JLBH01000002">
    <property type="protein sequence ID" value="KBN13754.1"/>
    <property type="molecule type" value="Genomic_DNA"/>
</dbReference>
<dbReference type="PIR" id="C70870">
    <property type="entry name" value="C70870"/>
</dbReference>
<dbReference type="PDB" id="3TUR">
    <property type="method" value="X-ray"/>
    <property type="resolution" value="1.72 A"/>
    <property type="chains" value="A/B=122-408"/>
</dbReference>
<dbReference type="PDB" id="3TX4">
    <property type="method" value="X-ray"/>
    <property type="resolution" value="2.32 A"/>
    <property type="chains" value="A/B=122-408"/>
</dbReference>
<dbReference type="PDB" id="3U1P">
    <property type="method" value="X-ray"/>
    <property type="resolution" value="2.80 A"/>
    <property type="chains" value="A/B=122-408"/>
</dbReference>
<dbReference type="PDB" id="3U1Q">
    <property type="method" value="X-ray"/>
    <property type="resolution" value="2.40 A"/>
    <property type="chains" value="A/B=122-408"/>
</dbReference>
<dbReference type="PDB" id="3VAE">
    <property type="method" value="X-ray"/>
    <property type="resolution" value="2.80 A"/>
    <property type="chains" value="A/B=122-408"/>
</dbReference>
<dbReference type="PDBsum" id="3TUR"/>
<dbReference type="PDBsum" id="3TX4"/>
<dbReference type="PDBsum" id="3U1P"/>
<dbReference type="PDBsum" id="3U1Q"/>
<dbReference type="PDBsum" id="3VAE"/>
<dbReference type="SMR" id="O53223"/>
<dbReference type="KEGG" id="mtc:MT2594"/>
<dbReference type="PATRIC" id="fig|83331.31.peg.2797"/>
<dbReference type="HOGENOM" id="CLU_039404_3_0_11"/>
<dbReference type="BRENDA" id="2.3.2.12">
    <property type="organism ID" value="3445"/>
</dbReference>
<dbReference type="BRENDA" id="2.3.2.B14">
    <property type="organism ID" value="3445"/>
</dbReference>
<dbReference type="UniPathway" id="UPA00219"/>
<dbReference type="EvolutionaryTrace" id="O53223"/>
<dbReference type="Proteomes" id="UP000001020">
    <property type="component" value="Chromosome"/>
</dbReference>
<dbReference type="GO" id="GO:0005576">
    <property type="term" value="C:extracellular region"/>
    <property type="evidence" value="ECO:0007669"/>
    <property type="project" value="TreeGrafter"/>
</dbReference>
<dbReference type="GO" id="GO:0009274">
    <property type="term" value="C:peptidoglycan-based cell wall"/>
    <property type="evidence" value="ECO:0007005"/>
    <property type="project" value="MTBBASE"/>
</dbReference>
<dbReference type="GO" id="GO:0005886">
    <property type="term" value="C:plasma membrane"/>
    <property type="evidence" value="ECO:0007669"/>
    <property type="project" value="UniProtKB-SubCell"/>
</dbReference>
<dbReference type="GO" id="GO:0016746">
    <property type="term" value="F:acyltransferase activity"/>
    <property type="evidence" value="ECO:0007669"/>
    <property type="project" value="UniProtKB-KW"/>
</dbReference>
<dbReference type="GO" id="GO:0046872">
    <property type="term" value="F:metal ion binding"/>
    <property type="evidence" value="ECO:0007669"/>
    <property type="project" value="UniProtKB-KW"/>
</dbReference>
<dbReference type="GO" id="GO:0071972">
    <property type="term" value="F:peptidoglycan L,D-transpeptidase activity"/>
    <property type="evidence" value="ECO:0000314"/>
    <property type="project" value="MTBBASE"/>
</dbReference>
<dbReference type="GO" id="GO:0071555">
    <property type="term" value="P:cell wall organization"/>
    <property type="evidence" value="ECO:0007669"/>
    <property type="project" value="UniProtKB-KW"/>
</dbReference>
<dbReference type="GO" id="GO:0000270">
    <property type="term" value="P:peptidoglycan metabolic process"/>
    <property type="evidence" value="ECO:0000314"/>
    <property type="project" value="MTBBASE"/>
</dbReference>
<dbReference type="GO" id="GO:0009273">
    <property type="term" value="P:peptidoglycan-based cell wall biogenesis"/>
    <property type="evidence" value="ECO:0000314"/>
    <property type="project" value="MTBBASE"/>
</dbReference>
<dbReference type="GO" id="GO:0018104">
    <property type="term" value="P:peptidoglycan-protein cross-linking"/>
    <property type="evidence" value="ECO:0007669"/>
    <property type="project" value="TreeGrafter"/>
</dbReference>
<dbReference type="GO" id="GO:0008360">
    <property type="term" value="P:regulation of cell shape"/>
    <property type="evidence" value="ECO:0007669"/>
    <property type="project" value="UniProtKB-KW"/>
</dbReference>
<dbReference type="CDD" id="cd13430">
    <property type="entry name" value="LDT_IgD_like"/>
    <property type="match status" value="1"/>
</dbReference>
<dbReference type="CDD" id="cd13432">
    <property type="entry name" value="LDT_IgD_like_2"/>
    <property type="match status" value="1"/>
</dbReference>
<dbReference type="CDD" id="cd16913">
    <property type="entry name" value="YkuD_like"/>
    <property type="match status" value="1"/>
</dbReference>
<dbReference type="FunFam" id="2.40.440.10:FF:000005">
    <property type="entry name" value="L,D-transpeptidase 2"/>
    <property type="match status" value="1"/>
</dbReference>
<dbReference type="FunFam" id="2.60.40.3710:FF:000001">
    <property type="entry name" value="L,D-transpeptidase 2"/>
    <property type="match status" value="1"/>
</dbReference>
<dbReference type="FunFam" id="2.60.40.3780:FF:000001">
    <property type="entry name" value="L,D-transpeptidase 2"/>
    <property type="match status" value="1"/>
</dbReference>
<dbReference type="Gene3D" id="2.60.40.3710">
    <property type="match status" value="1"/>
</dbReference>
<dbReference type="Gene3D" id="2.60.40.3780">
    <property type="match status" value="1"/>
</dbReference>
<dbReference type="Gene3D" id="2.40.440.10">
    <property type="entry name" value="L,D-transpeptidase catalytic domain-like"/>
    <property type="match status" value="1"/>
</dbReference>
<dbReference type="InterPro" id="IPR041280">
    <property type="entry name" value="Big_10"/>
</dbReference>
<dbReference type="InterPro" id="IPR050979">
    <property type="entry name" value="LD-transpeptidase"/>
</dbReference>
<dbReference type="InterPro" id="IPR005490">
    <property type="entry name" value="LD_TPept_cat_dom"/>
</dbReference>
<dbReference type="InterPro" id="IPR038063">
    <property type="entry name" value="Transpep_catalytic_dom"/>
</dbReference>
<dbReference type="PANTHER" id="PTHR30582">
    <property type="entry name" value="L,D-TRANSPEPTIDASE"/>
    <property type="match status" value="1"/>
</dbReference>
<dbReference type="PANTHER" id="PTHR30582:SF2">
    <property type="entry name" value="L,D-TRANSPEPTIDASE YCIB-RELATED"/>
    <property type="match status" value="1"/>
</dbReference>
<dbReference type="Pfam" id="PF17964">
    <property type="entry name" value="Big_10"/>
    <property type="match status" value="1"/>
</dbReference>
<dbReference type="Pfam" id="PF03734">
    <property type="entry name" value="YkuD"/>
    <property type="match status" value="1"/>
</dbReference>
<dbReference type="SUPFAM" id="SSF141523">
    <property type="entry name" value="L,D-transpeptidase catalytic domain-like"/>
    <property type="match status" value="1"/>
</dbReference>
<dbReference type="PROSITE" id="PS52029">
    <property type="entry name" value="LD_TPASE"/>
    <property type="match status" value="1"/>
</dbReference>
<dbReference type="PROSITE" id="PS51257">
    <property type="entry name" value="PROKAR_LIPOPROTEIN"/>
    <property type="match status" value="1"/>
</dbReference>
<feature type="signal peptide" evidence="2">
    <location>
        <begin position="1"/>
        <end position="34"/>
    </location>
</feature>
<feature type="chain" id="PRO_0000430333" description="L,D-transpeptidase 2">
    <location>
        <begin position="35"/>
        <end position="408"/>
    </location>
</feature>
<feature type="domain" description="L,D-TPase catalytic" evidence="3">
    <location>
        <begin position="253"/>
        <end position="378"/>
    </location>
</feature>
<feature type="active site" description="Proton donor/acceptor" evidence="3 7">
    <location>
        <position position="336"/>
    </location>
</feature>
<feature type="active site" description="Nucleophile" evidence="3 5">
    <location>
        <position position="354"/>
    </location>
</feature>
<feature type="binding site" evidence="1">
    <location>
        <position position="232"/>
    </location>
    <ligand>
        <name>Ca(2+)</name>
        <dbReference type="ChEBI" id="CHEBI:29108"/>
    </ligand>
</feature>
<feature type="binding site" evidence="1">
    <location>
        <position position="235"/>
    </location>
    <ligand>
        <name>Ca(2+)</name>
        <dbReference type="ChEBI" id="CHEBI:29108"/>
    </ligand>
</feature>
<feature type="binding site" evidence="1">
    <location>
        <position position="236"/>
    </location>
    <ligand>
        <name>Ca(2+)</name>
        <dbReference type="ChEBI" id="CHEBI:29108"/>
    </ligand>
</feature>
<feature type="binding site">
    <location>
        <position position="318"/>
    </location>
    <ligand>
        <name>substrate</name>
    </ligand>
</feature>
<feature type="binding site">
    <location>
        <begin position="331"/>
        <end position="332"/>
    </location>
    <ligand>
        <name>substrate</name>
    </ligand>
</feature>
<feature type="binding site">
    <location>
        <position position="356"/>
    </location>
    <ligand>
        <name>substrate</name>
    </ligand>
</feature>
<feature type="site" description="Binds to carbapenem drug (covalent)" evidence="1">
    <location>
        <position position="354"/>
    </location>
</feature>
<feature type="lipid moiety-binding region" description="N-palmitoyl cysteine" evidence="2">
    <location>
        <position position="35"/>
    </location>
</feature>
<feature type="lipid moiety-binding region" description="S-diacylglycerol cysteine" evidence="2">
    <location>
        <position position="35"/>
    </location>
</feature>
<feature type="strand" evidence="9">
    <location>
        <begin position="125"/>
        <end position="127"/>
    </location>
</feature>
<feature type="strand" evidence="8">
    <location>
        <begin position="154"/>
        <end position="158"/>
    </location>
</feature>
<feature type="strand" evidence="8">
    <location>
        <begin position="170"/>
        <end position="176"/>
    </location>
</feature>
<feature type="helix" evidence="8">
    <location>
        <begin position="181"/>
        <end position="187"/>
    </location>
</feature>
<feature type="strand" evidence="8">
    <location>
        <begin position="188"/>
        <end position="194"/>
    </location>
</feature>
<feature type="strand" evidence="8">
    <location>
        <begin position="198"/>
        <end position="204"/>
    </location>
</feature>
<feature type="strand" evidence="8">
    <location>
        <begin position="207"/>
        <end position="214"/>
    </location>
</feature>
<feature type="strand" evidence="8">
    <location>
        <begin position="221"/>
        <end position="227"/>
    </location>
</feature>
<feature type="strand" evidence="8">
    <location>
        <begin position="238"/>
        <end position="240"/>
    </location>
</feature>
<feature type="strand" evidence="8">
    <location>
        <begin position="242"/>
        <end position="249"/>
    </location>
</feature>
<feature type="strand" evidence="8">
    <location>
        <begin position="253"/>
        <end position="258"/>
    </location>
</feature>
<feature type="turn" evidence="8">
    <location>
        <begin position="259"/>
        <end position="261"/>
    </location>
</feature>
<feature type="strand" evidence="8">
    <location>
        <begin position="263"/>
        <end position="268"/>
    </location>
</feature>
<feature type="strand" evidence="8">
    <location>
        <begin position="271"/>
        <end position="277"/>
    </location>
</feature>
<feature type="strand" evidence="8">
    <location>
        <begin position="289"/>
        <end position="293"/>
    </location>
</feature>
<feature type="strand" evidence="8">
    <location>
        <begin position="297"/>
        <end position="304"/>
    </location>
</feature>
<feature type="helix" evidence="8">
    <location>
        <begin position="305"/>
        <end position="308"/>
    </location>
</feature>
<feature type="strand" evidence="8">
    <location>
        <begin position="319"/>
        <end position="327"/>
    </location>
</feature>
<feature type="strand" evidence="8">
    <location>
        <begin position="334"/>
        <end position="337"/>
    </location>
</feature>
<feature type="helix" evidence="8">
    <location>
        <begin position="339"/>
        <end position="341"/>
    </location>
</feature>
<feature type="turn" evidence="8">
    <location>
        <begin position="342"/>
        <end position="347"/>
    </location>
</feature>
<feature type="strand" evidence="8">
    <location>
        <begin position="351"/>
        <end position="357"/>
    </location>
</feature>
<feature type="helix" evidence="8">
    <location>
        <begin position="359"/>
        <end position="368"/>
    </location>
</feature>
<feature type="strand" evidence="8">
    <location>
        <begin position="374"/>
        <end position="379"/>
    </location>
</feature>
<feature type="strand" evidence="8">
    <location>
        <begin position="389"/>
        <end position="391"/>
    </location>
</feature>
<feature type="helix" evidence="8">
    <location>
        <begin position="393"/>
        <end position="395"/>
    </location>
</feature>
<feature type="helix" evidence="8">
    <location>
        <begin position="398"/>
        <end position="403"/>
    </location>
</feature>
<proteinExistence type="evidence at protein level"/>
<reference key="1">
    <citation type="journal article" date="2002" name="J. Bacteriol.">
        <title>Whole-genome comparison of Mycobacterium tuberculosis clinical and laboratory strains.</title>
        <authorList>
            <person name="Fleischmann R.D."/>
            <person name="Alland D."/>
            <person name="Eisen J.A."/>
            <person name="Carpenter L."/>
            <person name="White O."/>
            <person name="Peterson J.D."/>
            <person name="DeBoy R.T."/>
            <person name="Dodson R.J."/>
            <person name="Gwinn M.L."/>
            <person name="Haft D.H."/>
            <person name="Hickey E.K."/>
            <person name="Kolonay J.F."/>
            <person name="Nelson W.C."/>
            <person name="Umayam L.A."/>
            <person name="Ermolaeva M.D."/>
            <person name="Salzberg S.L."/>
            <person name="Delcher A."/>
            <person name="Utterback T.R."/>
            <person name="Weidman J.F."/>
            <person name="Khouri H.M."/>
            <person name="Gill J."/>
            <person name="Mikula A."/>
            <person name="Bishai W."/>
            <person name="Jacobs W.R. Jr."/>
            <person name="Venter J.C."/>
            <person name="Fraser C.M."/>
        </authorList>
    </citation>
    <scope>NUCLEOTIDE SEQUENCE [LARGE SCALE GENOMIC DNA]</scope>
    <source>
        <strain>CDC 1551 / Oshkosh</strain>
    </source>
</reference>
<reference key="2">
    <citation type="submission" date="2014-04" db="EMBL/GenBank/DDBJ databases">
        <title>The genome sequence of Mycobacterium tuberculosis CDC1551.</title>
        <authorList>
            <consortium name="The Broad Institute Genomics Platform"/>
            <consortium name="The Broad Institute Genome Sequencing Center for Infectious Disease"/>
            <person name="Earl A.M."/>
            <person name="Hung D."/>
            <person name="Gomez D."/>
            <person name="Hsueh P.R."/>
            <person name="Rozo J.C."/>
            <person name="Zambrano M.M."/>
            <person name="Desjardins C."/>
            <person name="Abeel T."/>
            <person name="Young S."/>
            <person name="Zeng Q."/>
            <person name="Gargeya S."/>
            <person name="Abouelleil A."/>
            <person name="Alvarado L."/>
            <person name="Chapman S.B."/>
            <person name="Gainer-Dewar J."/>
            <person name="Goldberg J."/>
            <person name="Griggs A."/>
            <person name="Gujja S."/>
            <person name="Hansen M."/>
            <person name="Howarth C."/>
            <person name="Imamovic A."/>
            <person name="Larimer J."/>
            <person name="Murphy C."/>
            <person name="Naylor J."/>
            <person name="Pearson M."/>
            <person name="Poon T.W."/>
            <person name="Priest M."/>
            <person name="Roberts A."/>
            <person name="Saif S."/>
            <person name="Shea T."/>
            <person name="Sykes S."/>
            <person name="Wortman J."/>
            <person name="Nusbaum C."/>
            <person name="Birren B."/>
        </authorList>
    </citation>
    <scope>NUCLEOTIDE SEQUENCE [LARGE SCALE GENOMIC DNA]</scope>
    <source>
        <strain>CDC 1551 / Oshkosh</strain>
    </source>
</reference>
<reference key="3">
    <citation type="journal article" date="2010" name="Nat. Med.">
        <title>The Mycobacterium tuberculosis protein LdtMt2 is a nonclassical transpeptidase required for virulence and resistance to amoxicillin.</title>
        <authorList>
            <person name="Gupta R."/>
            <person name="Lavollay M."/>
            <person name="Mainardi J.L."/>
            <person name="Arthur M."/>
            <person name="Bishai W.R."/>
            <person name="Lamichhane G."/>
        </authorList>
    </citation>
    <scope>FUNCTION</scope>
    <scope>CATALYTIC ACTIVITY</scope>
    <scope>SUBSTRATE SPECIFICITY</scope>
    <scope>DISRUPTION PHENOTYPE</scope>
    <scope>INDUCTION</scope>
    <source>
        <strain>CDC 1551 / Oshkosh</strain>
    </source>
</reference>
<reference key="4">
    <citation type="journal article" date="2014" name="J. Bacteriol.">
        <title>Nonclassical transpeptidases of Mycobacterium tuberculosis alter cell size, morphology, the cytosolic matrix, protein localization, virulence, and resistance to beta-lactams.</title>
        <authorList>
            <person name="Schoonmaker M.K."/>
            <person name="Bishai W.R."/>
            <person name="Lamichhane G."/>
        </authorList>
    </citation>
    <scope>DISRUPTION PHENOTYPE</scope>
    <source>
        <strain>CDC 1551 / Oshkosh</strain>
    </source>
</reference>
<reference key="5">
    <citation type="submission" date="2011-09" db="PDB data bank">
        <title>The structure of Mycobacterium tuberculosis L,D-transpeptidase 2 provides insights into targeting the cell wall of persisters.</title>
        <authorList>
            <person name="Erdemli S.B."/>
            <person name="Gupta R."/>
            <person name="Lamichhane G."/>
            <person name="Bishai W."/>
            <person name="Amzel L.M."/>
            <person name="Bianchet M.A."/>
        </authorList>
    </citation>
    <scope>X-RAY CRYSTALLOGRAPHY (2.40 ANGSTROMS) OF 122-408</scope>
    <source>
        <strain>CDC 1551 / Oshkosh</strain>
    </source>
</reference>
<reference key="6">
    <citation type="journal article" date="2012" name="Structure">
        <title>Targeting the cell wall of Mycobacterium tuberculosis: structure and mechanism of L,D-transpeptidase 2.</title>
        <authorList>
            <person name="Erdemli S.B."/>
            <person name="Gupta R."/>
            <person name="Bishai W.R."/>
            <person name="Lamichhane G."/>
            <person name="Amzel L.M."/>
            <person name="Bianchet M.A."/>
        </authorList>
    </citation>
    <scope>X-RAY CRYSTALLOGRAPHY (1.72 ANGSTROMS) OF 122-408 OF WILD-TYPE AND MUTANT ALA-354 IN COMPLEX WITH A PEPTIDOGLYCAN FRAGMENT</scope>
    <scope>REACTION MECHANISM</scope>
    <scope>ACTIVE SITE</scope>
    <scope>SUBUNIT</scope>
    <source>
        <strain>CDC 1551 / Oshkosh</strain>
    </source>
</reference>
<accession>O53223</accession>
<accession>F2GH40</accession>
<accession>Q7D6Z8</accession>
<evidence type="ECO:0000250" key="1"/>
<evidence type="ECO:0000255" key="2">
    <source>
        <dbReference type="PROSITE-ProRule" id="PRU00303"/>
    </source>
</evidence>
<evidence type="ECO:0000255" key="3">
    <source>
        <dbReference type="PROSITE-ProRule" id="PRU01373"/>
    </source>
</evidence>
<evidence type="ECO:0000269" key="4">
    <source>
    </source>
</evidence>
<evidence type="ECO:0000269" key="5">
    <source>
    </source>
</evidence>
<evidence type="ECO:0000269" key="6">
    <source>
    </source>
</evidence>
<evidence type="ECO:0000305" key="7">
    <source>
    </source>
</evidence>
<evidence type="ECO:0007829" key="8">
    <source>
        <dbReference type="PDB" id="3TUR"/>
    </source>
</evidence>
<evidence type="ECO:0007829" key="9">
    <source>
        <dbReference type="PDB" id="3TX4"/>
    </source>
</evidence>
<organism>
    <name type="scientific">Mycobacterium tuberculosis (strain CDC 1551 / Oshkosh)</name>
    <dbReference type="NCBI Taxonomy" id="83331"/>
    <lineage>
        <taxon>Bacteria</taxon>
        <taxon>Bacillati</taxon>
        <taxon>Actinomycetota</taxon>
        <taxon>Actinomycetes</taxon>
        <taxon>Mycobacteriales</taxon>
        <taxon>Mycobacteriaceae</taxon>
        <taxon>Mycobacterium</taxon>
        <taxon>Mycobacterium tuberculosis complex</taxon>
    </lineage>
</organism>
<gene>
    <name type="primary">ldtB</name>
    <name type="ordered locus">MT2594</name>
    <name type="ORF">V735_02606</name>
</gene>
<protein>
    <recommendedName>
        <fullName>L,D-transpeptidase 2</fullName>
        <shortName>LDT 2</shortName>
        <ecNumber>2.3.2.-</ecNumber>
    </recommendedName>
    <alternativeName>
        <fullName>Ldt(Mt2)</fullName>
    </alternativeName>
</protein>
<name>LDT2_MYCTO</name>
<sequence length="408" mass="43366">MPKVGIAAQAGRTRVRRAWLTALMMTAVMIGAVACGSGRGPAPIKVIADKGTPFADLLVPKLTASVTDGAVGVTVDAPVSVTAADGVLAAVTMVNDNGRPVAGRLSPDGLRWSTTEQLGYNRRYTLNATALGLGGAATRQLTFQTSSPAHLTMPYVMPGDGEVVGVGEPVAIRFDENIADRGAAEKAIKITTNPPVEGAFYWLNNREVRWRPEHFWKPGTAVDVAVNTYGVDLGEGMFGEDNVQTHFTIGDEVIATADDNTKILTVRVNGEVVKSMPTSMGKDSTPTANGIYIVGSRYKHIIMDSSTYGVPVNSPNGYRTDVDWATQISYSGVFVHSAPWSVGAQGHTNTSHGCLNVSPSNAQWFYDHVKRGDIVEVVNTVGGTLPGIDGLGDWNIPWDQWRAGNAKA</sequence>
<keyword id="KW-0002">3D-structure</keyword>
<keyword id="KW-0012">Acyltransferase</keyword>
<keyword id="KW-0106">Calcium</keyword>
<keyword id="KW-1003">Cell membrane</keyword>
<keyword id="KW-0133">Cell shape</keyword>
<keyword id="KW-0961">Cell wall biogenesis/degradation</keyword>
<keyword id="KW-0449">Lipoprotein</keyword>
<keyword id="KW-0472">Membrane</keyword>
<keyword id="KW-0479">Metal-binding</keyword>
<keyword id="KW-0564">Palmitate</keyword>
<keyword id="KW-0573">Peptidoglycan synthesis</keyword>
<keyword id="KW-1185">Reference proteome</keyword>
<keyword id="KW-0732">Signal</keyword>
<keyword id="KW-0808">Transferase</keyword>
<keyword id="KW-0843">Virulence</keyword>
<comment type="function">
    <text evidence="4">Generates 3-&gt;3 cross-links in peptidoglycan, catalyzing the cleavage of the mDap(3)-D-Ala(4) bond of a tetrapeptide donor stem and the formation of a bond between the carbonyl of mDap(3) of the donor stem and the side chain of mDap(3) of the acceptor stem. Is specific for donor substrates containing a stem tetrapeptide since it cannot use pentapeptide stems. Is essential for virulence in a mouse model of acute infection.</text>
</comment>
<comment type="activity regulation">
    <text evidence="1">Is irreversibly inactivated by the beta-lactams carbapenems via the formation of a covalent adduct resulting from acylation of the catalytic Cys.</text>
</comment>
<comment type="pathway">
    <text>Cell wall biogenesis; peptidoglycan biosynthesis.</text>
</comment>
<comment type="subunit">
    <text evidence="7">Monomer.</text>
</comment>
<comment type="subcellular location">
    <subcellularLocation>
        <location evidence="2">Cell membrane</location>
        <topology evidence="2">Lipid-anchor</topology>
    </subcellularLocation>
</comment>
<comment type="induction">
    <text evidence="4">Is expressed at a level higher than other LDT paralogs at all phases of growth.</text>
</comment>
<comment type="disruption phenotype">
    <text evidence="4 6">Inactivation of this gene leads to altered colony morphology and growth, attenuation of persistence and increased susceptibility to amoxicillin-clavulanate both in vitro and in the mouse model during the chronic phase of infection. Loss of both ldtMt1 and ldtMt2 results in phenotypes that are unique and/or severe compared to the single mutants lacking only ldtMt1 or ldtMt2. The double gene deletion severely alters cellular shape, intracellular morphology, physiology and virulence: the length of mutant cells are shorter than wild-type, they have deep surface depressions and bulges, they possess large unstained vacuole-like structures, the thickness of the peptidoglycan layer is smaller, the protein localization is altered, and in vitro and in vivo growth and virulence are severely attenuated. Moreover, double-mutant cells are more sensitive to vancomycin and amoxicillin-clavulanate.</text>
</comment>